<gene>
    <name evidence="1" type="primary">groEL1</name>
    <name evidence="1" type="synonym">groL1</name>
    <name type="synonym">mopA</name>
    <name type="ordered locus">BPSL2697</name>
</gene>
<keyword id="KW-0067">ATP-binding</keyword>
<keyword id="KW-0143">Chaperone</keyword>
<keyword id="KW-0963">Cytoplasm</keyword>
<keyword id="KW-0413">Isomerase</keyword>
<keyword id="KW-0547">Nucleotide-binding</keyword>
<keyword id="KW-1185">Reference proteome</keyword>
<feature type="chain" id="PRO_0000063318" description="Chaperonin GroEL 1">
    <location>
        <begin position="1"/>
        <end position="546"/>
    </location>
</feature>
<feature type="region of interest" description="Disordered" evidence="2">
    <location>
        <begin position="526"/>
        <end position="546"/>
    </location>
</feature>
<feature type="compositionally biased region" description="Gly residues" evidence="2">
    <location>
        <begin position="534"/>
        <end position="546"/>
    </location>
</feature>
<feature type="binding site" evidence="1">
    <location>
        <begin position="30"/>
        <end position="33"/>
    </location>
    <ligand>
        <name>ATP</name>
        <dbReference type="ChEBI" id="CHEBI:30616"/>
    </ligand>
</feature>
<feature type="binding site" evidence="1">
    <location>
        <position position="51"/>
    </location>
    <ligand>
        <name>ATP</name>
        <dbReference type="ChEBI" id="CHEBI:30616"/>
    </ligand>
</feature>
<feature type="binding site" evidence="1">
    <location>
        <begin position="87"/>
        <end position="91"/>
    </location>
    <ligand>
        <name>ATP</name>
        <dbReference type="ChEBI" id="CHEBI:30616"/>
    </ligand>
</feature>
<feature type="binding site" evidence="1">
    <location>
        <position position="415"/>
    </location>
    <ligand>
        <name>ATP</name>
        <dbReference type="ChEBI" id="CHEBI:30616"/>
    </ligand>
</feature>
<feature type="binding site" evidence="1">
    <location>
        <begin position="479"/>
        <end position="481"/>
    </location>
    <ligand>
        <name>ATP</name>
        <dbReference type="ChEBI" id="CHEBI:30616"/>
    </ligand>
</feature>
<feature type="binding site" evidence="1">
    <location>
        <position position="495"/>
    </location>
    <ligand>
        <name>ATP</name>
        <dbReference type="ChEBI" id="CHEBI:30616"/>
    </ligand>
</feature>
<feature type="sequence conflict" description="In Ref. 1; AAG32927." evidence="3" ref="1">
    <original>G</original>
    <variation>S</variation>
    <location>
        <position position="428"/>
    </location>
</feature>
<accession>Q9F712</accession>
<accession>Q63RH5</accession>
<protein>
    <recommendedName>
        <fullName evidence="1">Chaperonin GroEL 1</fullName>
        <ecNumber evidence="1">5.6.1.7</ecNumber>
    </recommendedName>
    <alternativeName>
        <fullName evidence="1">60 kDa chaperonin 1</fullName>
    </alternativeName>
    <alternativeName>
        <fullName evidence="1">Chaperonin-60 1</fullName>
        <shortName evidence="1">Cpn60 1</shortName>
    </alternativeName>
</protein>
<comment type="function">
    <text evidence="1">Together with its co-chaperonin GroES, plays an essential role in assisting protein folding. The GroEL-GroES system forms a nano-cage that allows encapsulation of the non-native substrate proteins and provides a physical environment optimized to promote and accelerate protein folding.</text>
</comment>
<comment type="catalytic activity">
    <reaction evidence="1">
        <text>ATP + H2O + a folded polypeptide = ADP + phosphate + an unfolded polypeptide.</text>
        <dbReference type="EC" id="5.6.1.7"/>
    </reaction>
</comment>
<comment type="subunit">
    <text evidence="1">Forms a cylinder of 14 subunits composed of two heptameric rings stacked back-to-back. Interacts with the co-chaperonin GroES.</text>
</comment>
<comment type="subcellular location">
    <subcellularLocation>
        <location evidence="1">Cytoplasm</location>
    </subcellularLocation>
</comment>
<comment type="similarity">
    <text evidence="1">Belongs to the chaperonin (HSP60) family.</text>
</comment>
<proteinExistence type="inferred from homology"/>
<organism>
    <name type="scientific">Burkholderia pseudomallei (strain K96243)</name>
    <dbReference type="NCBI Taxonomy" id="272560"/>
    <lineage>
        <taxon>Bacteria</taxon>
        <taxon>Pseudomonadati</taxon>
        <taxon>Pseudomonadota</taxon>
        <taxon>Betaproteobacteria</taxon>
        <taxon>Burkholderiales</taxon>
        <taxon>Burkholderiaceae</taxon>
        <taxon>Burkholderia</taxon>
        <taxon>pseudomallei group</taxon>
    </lineage>
</organism>
<dbReference type="EC" id="5.6.1.7" evidence="1"/>
<dbReference type="EMBL" id="AF287633">
    <property type="protein sequence ID" value="AAG32927.1"/>
    <property type="molecule type" value="Genomic_DNA"/>
</dbReference>
<dbReference type="EMBL" id="BX571965">
    <property type="protein sequence ID" value="CAH36705.1"/>
    <property type="molecule type" value="Genomic_DNA"/>
</dbReference>
<dbReference type="RefSeq" id="YP_109293.1">
    <property type="nucleotide sequence ID" value="NC_006350.1"/>
</dbReference>
<dbReference type="SMR" id="Q9F712"/>
<dbReference type="STRING" id="272560.BPSL2697"/>
<dbReference type="KEGG" id="bps:BPSL2697"/>
<dbReference type="PATRIC" id="fig|272560.51.peg.2645"/>
<dbReference type="eggNOG" id="COG0459">
    <property type="taxonomic scope" value="Bacteria"/>
</dbReference>
<dbReference type="Proteomes" id="UP000000605">
    <property type="component" value="Chromosome 1"/>
</dbReference>
<dbReference type="GO" id="GO:0005737">
    <property type="term" value="C:cytoplasm"/>
    <property type="evidence" value="ECO:0007669"/>
    <property type="project" value="UniProtKB-SubCell"/>
</dbReference>
<dbReference type="GO" id="GO:0005524">
    <property type="term" value="F:ATP binding"/>
    <property type="evidence" value="ECO:0007669"/>
    <property type="project" value="UniProtKB-UniRule"/>
</dbReference>
<dbReference type="GO" id="GO:0140662">
    <property type="term" value="F:ATP-dependent protein folding chaperone"/>
    <property type="evidence" value="ECO:0007669"/>
    <property type="project" value="InterPro"/>
</dbReference>
<dbReference type="GO" id="GO:0016853">
    <property type="term" value="F:isomerase activity"/>
    <property type="evidence" value="ECO:0007669"/>
    <property type="project" value="UniProtKB-KW"/>
</dbReference>
<dbReference type="GO" id="GO:0051082">
    <property type="term" value="F:unfolded protein binding"/>
    <property type="evidence" value="ECO:0007669"/>
    <property type="project" value="UniProtKB-UniRule"/>
</dbReference>
<dbReference type="GO" id="GO:0042026">
    <property type="term" value="P:protein refolding"/>
    <property type="evidence" value="ECO:0007669"/>
    <property type="project" value="UniProtKB-UniRule"/>
</dbReference>
<dbReference type="CDD" id="cd03344">
    <property type="entry name" value="GroEL"/>
    <property type="match status" value="1"/>
</dbReference>
<dbReference type="FunFam" id="1.10.560.10:FF:000001">
    <property type="entry name" value="60 kDa chaperonin"/>
    <property type="match status" value="1"/>
</dbReference>
<dbReference type="FunFam" id="3.50.7.10:FF:000001">
    <property type="entry name" value="60 kDa chaperonin"/>
    <property type="match status" value="1"/>
</dbReference>
<dbReference type="Gene3D" id="3.50.7.10">
    <property type="entry name" value="GroEL"/>
    <property type="match status" value="1"/>
</dbReference>
<dbReference type="Gene3D" id="1.10.560.10">
    <property type="entry name" value="GroEL-like equatorial domain"/>
    <property type="match status" value="1"/>
</dbReference>
<dbReference type="Gene3D" id="3.30.260.10">
    <property type="entry name" value="TCP-1-like chaperonin intermediate domain"/>
    <property type="match status" value="1"/>
</dbReference>
<dbReference type="HAMAP" id="MF_00600">
    <property type="entry name" value="CH60"/>
    <property type="match status" value="1"/>
</dbReference>
<dbReference type="InterPro" id="IPR018370">
    <property type="entry name" value="Chaperonin_Cpn60_CS"/>
</dbReference>
<dbReference type="InterPro" id="IPR001844">
    <property type="entry name" value="Cpn60/GroEL"/>
</dbReference>
<dbReference type="InterPro" id="IPR002423">
    <property type="entry name" value="Cpn60/GroEL/TCP-1"/>
</dbReference>
<dbReference type="InterPro" id="IPR027409">
    <property type="entry name" value="GroEL-like_apical_dom_sf"/>
</dbReference>
<dbReference type="InterPro" id="IPR027413">
    <property type="entry name" value="GROEL-like_equatorial_sf"/>
</dbReference>
<dbReference type="InterPro" id="IPR027410">
    <property type="entry name" value="TCP-1-like_intermed_sf"/>
</dbReference>
<dbReference type="NCBIfam" id="TIGR02348">
    <property type="entry name" value="GroEL"/>
    <property type="match status" value="1"/>
</dbReference>
<dbReference type="NCBIfam" id="NF000592">
    <property type="entry name" value="PRK00013.1"/>
    <property type="match status" value="1"/>
</dbReference>
<dbReference type="NCBIfam" id="NF009487">
    <property type="entry name" value="PRK12849.1"/>
    <property type="match status" value="1"/>
</dbReference>
<dbReference type="NCBIfam" id="NF009488">
    <property type="entry name" value="PRK12850.1"/>
    <property type="match status" value="1"/>
</dbReference>
<dbReference type="NCBIfam" id="NF009489">
    <property type="entry name" value="PRK12851.1"/>
    <property type="match status" value="1"/>
</dbReference>
<dbReference type="PANTHER" id="PTHR45633">
    <property type="entry name" value="60 KDA HEAT SHOCK PROTEIN, MITOCHONDRIAL"/>
    <property type="match status" value="1"/>
</dbReference>
<dbReference type="Pfam" id="PF00118">
    <property type="entry name" value="Cpn60_TCP1"/>
    <property type="match status" value="1"/>
</dbReference>
<dbReference type="PRINTS" id="PR00298">
    <property type="entry name" value="CHAPERONIN60"/>
</dbReference>
<dbReference type="SUPFAM" id="SSF52029">
    <property type="entry name" value="GroEL apical domain-like"/>
    <property type="match status" value="1"/>
</dbReference>
<dbReference type="SUPFAM" id="SSF48592">
    <property type="entry name" value="GroEL equatorial domain-like"/>
    <property type="match status" value="1"/>
</dbReference>
<dbReference type="SUPFAM" id="SSF54849">
    <property type="entry name" value="GroEL-intermediate domain like"/>
    <property type="match status" value="1"/>
</dbReference>
<dbReference type="PROSITE" id="PS00296">
    <property type="entry name" value="CHAPERONINS_CPN60"/>
    <property type="match status" value="1"/>
</dbReference>
<name>CH601_BURPS</name>
<reference key="1">
    <citation type="submission" date="2000-07" db="EMBL/GenBank/DDBJ databases">
        <authorList>
            <person name="Woo P.C.Y."/>
            <person name="Leung P.K.L."/>
        </authorList>
    </citation>
    <scope>NUCLEOTIDE SEQUENCE [GENOMIC DNA]</scope>
</reference>
<reference key="2">
    <citation type="journal article" date="2004" name="Proc. Natl. Acad. Sci. U.S.A.">
        <title>Genomic plasticity of the causative agent of melioidosis, Burkholderia pseudomallei.</title>
        <authorList>
            <person name="Holden M.T.G."/>
            <person name="Titball R.W."/>
            <person name="Peacock S.J."/>
            <person name="Cerdeno-Tarraga A.-M."/>
            <person name="Atkins T."/>
            <person name="Crossman L.C."/>
            <person name="Pitt T."/>
            <person name="Churcher C."/>
            <person name="Mungall K.L."/>
            <person name="Bentley S.D."/>
            <person name="Sebaihia M."/>
            <person name="Thomson N.R."/>
            <person name="Bason N."/>
            <person name="Beacham I.R."/>
            <person name="Brooks K."/>
            <person name="Brown K.A."/>
            <person name="Brown N.F."/>
            <person name="Challis G.L."/>
            <person name="Cherevach I."/>
            <person name="Chillingworth T."/>
            <person name="Cronin A."/>
            <person name="Crossett B."/>
            <person name="Davis P."/>
            <person name="DeShazer D."/>
            <person name="Feltwell T."/>
            <person name="Fraser A."/>
            <person name="Hance Z."/>
            <person name="Hauser H."/>
            <person name="Holroyd S."/>
            <person name="Jagels K."/>
            <person name="Keith K.E."/>
            <person name="Maddison M."/>
            <person name="Moule S."/>
            <person name="Price C."/>
            <person name="Quail M.A."/>
            <person name="Rabbinowitsch E."/>
            <person name="Rutherford K."/>
            <person name="Sanders M."/>
            <person name="Simmonds M."/>
            <person name="Songsivilai S."/>
            <person name="Stevens K."/>
            <person name="Tumapa S."/>
            <person name="Vesaratchavest M."/>
            <person name="Whitehead S."/>
            <person name="Yeats C."/>
            <person name="Barrell B.G."/>
            <person name="Oyston P.C.F."/>
            <person name="Parkhill J."/>
        </authorList>
    </citation>
    <scope>NUCLEOTIDE SEQUENCE [LARGE SCALE GENOMIC DNA]</scope>
    <source>
        <strain>K96243</strain>
    </source>
</reference>
<evidence type="ECO:0000255" key="1">
    <source>
        <dbReference type="HAMAP-Rule" id="MF_00600"/>
    </source>
</evidence>
<evidence type="ECO:0000256" key="2">
    <source>
        <dbReference type="SAM" id="MobiDB-lite"/>
    </source>
</evidence>
<evidence type="ECO:0000305" key="3"/>
<sequence>MAAKDVVFGDSARAKMVEGVNILANAVKVTLGPKGRNVVLERSFGGPTVTKDGVSVAKEIELKDKLQNMGAQMVKEVASKTSDNAGDGTTTATVLAQSIVREGMKYVASGMNPMDLKRGIDKAVAAAVEELKKISKPCTTNKEIAQVGAISANSDSSIGDRIAEAMDKVGKEGVITVEDGKSLADELDVVEGMQFDRGYLSPYFINNPDKQVAVLENPFVLLHDKKVSNIRDLLPVLEQVAKAGRPLLIIAEDVEGEALATLVVNNIRGILKTVAVKAPGFGDRRKAMLEDIAILTGGQVIAEETGLTLEKATLAELGQAKRIEVGKENTTIIDGAGEAVNIEARVKQIRTQIEEATSDYDREKLQERVAKLAGGVAVIKVGAATEVEMKEKKARVEDALHATRAAVEEGIVPGGGVALIRARTAIAGLTGVNADQNAGIKIVLRAMEEPLRQIVTNGGEEASVVVAAVAAGKGNYGYNAATGEYVDMVEAGVVDPTKVTRTALQNAASVAGLLLTTDAAVAELPKEDAPMPGGMPGGMGGMGMDM</sequence>